<evidence type="ECO:0000255" key="1">
    <source>
        <dbReference type="PROSITE-ProRule" id="PRU00286"/>
    </source>
</evidence>
<accession>P50027</accession>
<protein>
    <recommendedName>
        <fullName>DnAJ-like protein slr0093</fullName>
    </recommendedName>
</protein>
<name>DNAJH_SYNY3</name>
<proteinExistence type="predicted"/>
<dbReference type="EMBL" id="BA000022">
    <property type="protein sequence ID" value="BAA10566.1"/>
    <property type="molecule type" value="Genomic_DNA"/>
</dbReference>
<dbReference type="PIR" id="S76622">
    <property type="entry name" value="S76622"/>
</dbReference>
<dbReference type="SMR" id="P50027"/>
<dbReference type="IntAct" id="P50027">
    <property type="interactions" value="2"/>
</dbReference>
<dbReference type="STRING" id="1148.gene:10500070"/>
<dbReference type="PaxDb" id="1148-1001729"/>
<dbReference type="EnsemblBacteria" id="BAA10566">
    <property type="protein sequence ID" value="BAA10566"/>
    <property type="gene ID" value="BAA10566"/>
</dbReference>
<dbReference type="KEGG" id="syn:slr0093"/>
<dbReference type="eggNOG" id="COG0484">
    <property type="taxonomic scope" value="Bacteria"/>
</dbReference>
<dbReference type="InParanoid" id="P50027"/>
<dbReference type="PhylomeDB" id="P50027"/>
<dbReference type="Proteomes" id="UP000001425">
    <property type="component" value="Chromosome"/>
</dbReference>
<dbReference type="GO" id="GO:0005829">
    <property type="term" value="C:cytosol"/>
    <property type="evidence" value="ECO:0000318"/>
    <property type="project" value="GO_Central"/>
</dbReference>
<dbReference type="GO" id="GO:0051087">
    <property type="term" value="F:protein-folding chaperone binding"/>
    <property type="evidence" value="ECO:0000318"/>
    <property type="project" value="GO_Central"/>
</dbReference>
<dbReference type="GO" id="GO:0051082">
    <property type="term" value="F:unfolded protein binding"/>
    <property type="evidence" value="ECO:0000318"/>
    <property type="project" value="GO_Central"/>
</dbReference>
<dbReference type="GO" id="GO:0051085">
    <property type="term" value="P:chaperone cofactor-dependent protein refolding"/>
    <property type="evidence" value="ECO:0000318"/>
    <property type="project" value="GO_Central"/>
</dbReference>
<dbReference type="CDD" id="cd06257">
    <property type="entry name" value="DnaJ"/>
    <property type="match status" value="1"/>
</dbReference>
<dbReference type="CDD" id="cd10747">
    <property type="entry name" value="DnaJ_C"/>
    <property type="match status" value="1"/>
</dbReference>
<dbReference type="FunFam" id="1.10.287.110:FF:000067">
    <property type="entry name" value="Chaperone DnaJ domain protein"/>
    <property type="match status" value="1"/>
</dbReference>
<dbReference type="FunFam" id="2.60.260.20:FF:000013">
    <property type="entry name" value="DnaJ subfamily B member 11"/>
    <property type="match status" value="1"/>
</dbReference>
<dbReference type="Gene3D" id="1.10.287.110">
    <property type="entry name" value="DnaJ domain"/>
    <property type="match status" value="1"/>
</dbReference>
<dbReference type="Gene3D" id="2.60.260.20">
    <property type="entry name" value="Urease metallochaperone UreE, N-terminal domain"/>
    <property type="match status" value="2"/>
</dbReference>
<dbReference type="InterPro" id="IPR002939">
    <property type="entry name" value="DnaJ_C"/>
</dbReference>
<dbReference type="InterPro" id="IPR001623">
    <property type="entry name" value="DnaJ_domain"/>
</dbReference>
<dbReference type="InterPro" id="IPR018253">
    <property type="entry name" value="DnaJ_domain_CS"/>
</dbReference>
<dbReference type="InterPro" id="IPR008971">
    <property type="entry name" value="HSP40/DnaJ_pept-bd"/>
</dbReference>
<dbReference type="InterPro" id="IPR036869">
    <property type="entry name" value="J_dom_sf"/>
</dbReference>
<dbReference type="PANTHER" id="PTHR43096">
    <property type="entry name" value="DNAJ HOMOLOG 1, MITOCHONDRIAL-RELATED"/>
    <property type="match status" value="1"/>
</dbReference>
<dbReference type="PANTHER" id="PTHR43096:SF52">
    <property type="entry name" value="DNAJ HOMOLOG 1, MITOCHONDRIAL-RELATED"/>
    <property type="match status" value="1"/>
</dbReference>
<dbReference type="Pfam" id="PF00226">
    <property type="entry name" value="DnaJ"/>
    <property type="match status" value="1"/>
</dbReference>
<dbReference type="Pfam" id="PF01556">
    <property type="entry name" value="DnaJ_C"/>
    <property type="match status" value="1"/>
</dbReference>
<dbReference type="PRINTS" id="PR00625">
    <property type="entry name" value="JDOMAIN"/>
</dbReference>
<dbReference type="SMART" id="SM00271">
    <property type="entry name" value="DnaJ"/>
    <property type="match status" value="1"/>
</dbReference>
<dbReference type="SUPFAM" id="SSF46565">
    <property type="entry name" value="Chaperone J-domain"/>
    <property type="match status" value="1"/>
</dbReference>
<dbReference type="SUPFAM" id="SSF49493">
    <property type="entry name" value="HSP40/DnaJ peptide-binding domain"/>
    <property type="match status" value="2"/>
</dbReference>
<dbReference type="PROSITE" id="PS00636">
    <property type="entry name" value="DNAJ_1"/>
    <property type="match status" value="1"/>
</dbReference>
<dbReference type="PROSITE" id="PS50076">
    <property type="entry name" value="DNAJ_2"/>
    <property type="match status" value="1"/>
</dbReference>
<gene>
    <name type="ordered locus">slr0093</name>
</gene>
<reference key="1">
    <citation type="journal article" date="1995" name="DNA Res.">
        <title>Sequence analysis of the genome of the unicellular cyanobacterium Synechocystis sp. strain PCC6803. I. Sequence features in the 1 Mb region from map positions 64% to 92% of the genome.</title>
        <authorList>
            <person name="Kaneko T."/>
            <person name="Tanaka A."/>
            <person name="Sato S."/>
            <person name="Kotani H."/>
            <person name="Sazuka T."/>
            <person name="Miyajima N."/>
            <person name="Sugiura M."/>
            <person name="Tabata S."/>
        </authorList>
    </citation>
    <scope>NUCLEOTIDE SEQUENCE [LARGE SCALE GENOMIC DNA]</scope>
    <source>
        <strain>ATCC 27184 / PCC 6803 / N-1</strain>
    </source>
</reference>
<reference key="2">
    <citation type="journal article" date="1996" name="DNA Res.">
        <title>Sequence analysis of the genome of the unicellular cyanobacterium Synechocystis sp. strain PCC6803. II. Sequence determination of the entire genome and assignment of potential protein-coding regions.</title>
        <authorList>
            <person name="Kaneko T."/>
            <person name="Sato S."/>
            <person name="Kotani H."/>
            <person name="Tanaka A."/>
            <person name="Asamizu E."/>
            <person name="Nakamura Y."/>
            <person name="Miyajima N."/>
            <person name="Hirosawa M."/>
            <person name="Sugiura M."/>
            <person name="Sasamoto S."/>
            <person name="Kimura T."/>
            <person name="Hosouchi T."/>
            <person name="Matsuno A."/>
            <person name="Muraki A."/>
            <person name="Nakazaki N."/>
            <person name="Naruo K."/>
            <person name="Okumura S."/>
            <person name="Shimpo S."/>
            <person name="Takeuchi C."/>
            <person name="Wada T."/>
            <person name="Watanabe A."/>
            <person name="Yamada M."/>
            <person name="Yasuda M."/>
            <person name="Tabata S."/>
        </authorList>
    </citation>
    <scope>NUCLEOTIDE SEQUENCE [LARGE SCALE GENOMIC DNA]</scope>
    <source>
        <strain>ATCC 27184 / PCC 6803 / Kazusa</strain>
    </source>
</reference>
<organism>
    <name type="scientific">Synechocystis sp. (strain ATCC 27184 / PCC 6803 / Kazusa)</name>
    <dbReference type="NCBI Taxonomy" id="1111708"/>
    <lineage>
        <taxon>Bacteria</taxon>
        <taxon>Bacillati</taxon>
        <taxon>Cyanobacteriota</taxon>
        <taxon>Cyanophyceae</taxon>
        <taxon>Synechococcales</taxon>
        <taxon>Merismopediaceae</taxon>
        <taxon>Synechocystis</taxon>
    </lineage>
</organism>
<sequence length="332" mass="36366">MASTDFKDYYQILGVTKTASEAEIKKQFRKLALKYHPDKNPGDKAAEEKFKEISEAYEVLSDPEKRQKYDQFGRYWQQAGTAGQPSGSYGPGVGVDFGGFDFSQYGNFDEFINELLGRFNTPGGGGQRTSYSYSTGGPGFNDFGGFGNAQAPAGDREATLQLTLAEAFRGVEKRLNLGEEMVTVRIPAGAKNGSRVRVRGKGMASPYGQRGDLYLNLQLTPHPFFQFEGDNLVCELAIAPDEAVLGADISVPTPDGMVRMKVPAGVKSGQSLRLKGKGWPNPKQGRGDQLVRLIITAPKNPSAIERECYEKIQAQRTENPRQAVEKYANLLA</sequence>
<keyword id="KW-0143">Chaperone</keyword>
<keyword id="KW-1185">Reference proteome</keyword>
<feature type="chain" id="PRO_0000071004" description="DnAJ-like protein slr0093">
    <location>
        <begin position="1"/>
        <end position="332"/>
    </location>
</feature>
<feature type="domain" description="J" evidence="1">
    <location>
        <begin position="6"/>
        <end position="75"/>
    </location>
</feature>